<keyword id="KW-0627">Porphyrin biosynthesis</keyword>
<keyword id="KW-0808">Transferase</keyword>
<gene>
    <name evidence="1" type="primary">hemC</name>
    <name type="ordered locus">BcerKBAB4_4309</name>
</gene>
<protein>
    <recommendedName>
        <fullName evidence="1">Porphobilinogen deaminase</fullName>
        <shortName evidence="1">PBG</shortName>
        <ecNumber evidence="1">2.5.1.61</ecNumber>
    </recommendedName>
    <alternativeName>
        <fullName evidence="1">Hydroxymethylbilane synthase</fullName>
        <shortName evidence="1">HMBS</shortName>
    </alternativeName>
    <alternativeName>
        <fullName evidence="1">Pre-uroporphyrinogen synthase</fullName>
    </alternativeName>
</protein>
<proteinExistence type="inferred from homology"/>
<feature type="chain" id="PRO_1000114134" description="Porphobilinogen deaminase">
    <location>
        <begin position="1"/>
        <end position="309"/>
    </location>
</feature>
<feature type="modified residue" description="S-(dipyrrolylmethanemethyl)cysteine" evidence="1">
    <location>
        <position position="241"/>
    </location>
</feature>
<organism>
    <name type="scientific">Bacillus mycoides (strain KBAB4)</name>
    <name type="common">Bacillus weihenstephanensis</name>
    <dbReference type="NCBI Taxonomy" id="315730"/>
    <lineage>
        <taxon>Bacteria</taxon>
        <taxon>Bacillati</taxon>
        <taxon>Bacillota</taxon>
        <taxon>Bacilli</taxon>
        <taxon>Bacillales</taxon>
        <taxon>Bacillaceae</taxon>
        <taxon>Bacillus</taxon>
        <taxon>Bacillus cereus group</taxon>
    </lineage>
</organism>
<comment type="function">
    <text evidence="1">Tetrapolymerization of the monopyrrole PBG into the hydroxymethylbilane pre-uroporphyrinogen in several discrete steps.</text>
</comment>
<comment type="catalytic activity">
    <reaction evidence="1">
        <text>4 porphobilinogen + H2O = hydroxymethylbilane + 4 NH4(+)</text>
        <dbReference type="Rhea" id="RHEA:13185"/>
        <dbReference type="ChEBI" id="CHEBI:15377"/>
        <dbReference type="ChEBI" id="CHEBI:28938"/>
        <dbReference type="ChEBI" id="CHEBI:57845"/>
        <dbReference type="ChEBI" id="CHEBI:58126"/>
        <dbReference type="EC" id="2.5.1.61"/>
    </reaction>
</comment>
<comment type="cofactor">
    <cofactor evidence="1">
        <name>dipyrromethane</name>
        <dbReference type="ChEBI" id="CHEBI:60342"/>
    </cofactor>
    <text evidence="1">Binds 1 dipyrromethane group covalently.</text>
</comment>
<comment type="pathway">
    <text evidence="1">Porphyrin-containing compound metabolism; protoporphyrin-IX biosynthesis; coproporphyrinogen-III from 5-aminolevulinate: step 2/4.</text>
</comment>
<comment type="subunit">
    <text evidence="1">Monomer.</text>
</comment>
<comment type="miscellaneous">
    <text evidence="1">The porphobilinogen subunits are added to the dipyrromethane group.</text>
</comment>
<comment type="similarity">
    <text evidence="1">Belongs to the HMBS family.</text>
</comment>
<evidence type="ECO:0000255" key="1">
    <source>
        <dbReference type="HAMAP-Rule" id="MF_00260"/>
    </source>
</evidence>
<reference key="1">
    <citation type="journal article" date="2008" name="Chem. Biol. Interact.">
        <title>Extending the Bacillus cereus group genomics to putative food-borne pathogens of different toxicity.</title>
        <authorList>
            <person name="Lapidus A."/>
            <person name="Goltsman E."/>
            <person name="Auger S."/>
            <person name="Galleron N."/>
            <person name="Segurens B."/>
            <person name="Dossat C."/>
            <person name="Land M.L."/>
            <person name="Broussolle V."/>
            <person name="Brillard J."/>
            <person name="Guinebretiere M.-H."/>
            <person name="Sanchis V."/>
            <person name="Nguen-the C."/>
            <person name="Lereclus D."/>
            <person name="Richardson P."/>
            <person name="Wincker P."/>
            <person name="Weissenbach J."/>
            <person name="Ehrlich S.D."/>
            <person name="Sorokin A."/>
        </authorList>
    </citation>
    <scope>NUCLEOTIDE SEQUENCE [LARGE SCALE GENOMIC DNA]</scope>
    <source>
        <strain>KBAB4</strain>
    </source>
</reference>
<name>HEM3_BACMK</name>
<dbReference type="EC" id="2.5.1.61" evidence="1"/>
<dbReference type="EMBL" id="CP000903">
    <property type="protein sequence ID" value="ABY45468.1"/>
    <property type="molecule type" value="Genomic_DNA"/>
</dbReference>
<dbReference type="RefSeq" id="WP_012261766.1">
    <property type="nucleotide sequence ID" value="NC_010184.1"/>
</dbReference>
<dbReference type="SMR" id="A9VIT8"/>
<dbReference type="KEGG" id="bwe:BcerKBAB4_4309"/>
<dbReference type="eggNOG" id="COG0181">
    <property type="taxonomic scope" value="Bacteria"/>
</dbReference>
<dbReference type="HOGENOM" id="CLU_019704_0_2_9"/>
<dbReference type="UniPathway" id="UPA00251">
    <property type="reaction ID" value="UER00319"/>
</dbReference>
<dbReference type="Proteomes" id="UP000002154">
    <property type="component" value="Chromosome"/>
</dbReference>
<dbReference type="GO" id="GO:0005737">
    <property type="term" value="C:cytoplasm"/>
    <property type="evidence" value="ECO:0007669"/>
    <property type="project" value="TreeGrafter"/>
</dbReference>
<dbReference type="GO" id="GO:0004418">
    <property type="term" value="F:hydroxymethylbilane synthase activity"/>
    <property type="evidence" value="ECO:0007669"/>
    <property type="project" value="UniProtKB-UniRule"/>
</dbReference>
<dbReference type="GO" id="GO:0006782">
    <property type="term" value="P:protoporphyrinogen IX biosynthetic process"/>
    <property type="evidence" value="ECO:0007669"/>
    <property type="project" value="UniProtKB-UniRule"/>
</dbReference>
<dbReference type="CDD" id="cd13646">
    <property type="entry name" value="PBP2_EcHMBS_like"/>
    <property type="match status" value="1"/>
</dbReference>
<dbReference type="FunFam" id="3.30.160.40:FF:000001">
    <property type="entry name" value="Porphobilinogen deaminase"/>
    <property type="match status" value="1"/>
</dbReference>
<dbReference type="FunFam" id="3.40.190.10:FF:000004">
    <property type="entry name" value="Porphobilinogen deaminase"/>
    <property type="match status" value="1"/>
</dbReference>
<dbReference type="FunFam" id="3.40.190.10:FF:000005">
    <property type="entry name" value="Porphobilinogen deaminase"/>
    <property type="match status" value="1"/>
</dbReference>
<dbReference type="Gene3D" id="3.40.190.10">
    <property type="entry name" value="Periplasmic binding protein-like II"/>
    <property type="match status" value="2"/>
</dbReference>
<dbReference type="Gene3D" id="3.30.160.40">
    <property type="entry name" value="Porphobilinogen deaminase, C-terminal domain"/>
    <property type="match status" value="1"/>
</dbReference>
<dbReference type="HAMAP" id="MF_00260">
    <property type="entry name" value="Porphobil_deam"/>
    <property type="match status" value="1"/>
</dbReference>
<dbReference type="InterPro" id="IPR000860">
    <property type="entry name" value="HemC"/>
</dbReference>
<dbReference type="InterPro" id="IPR022419">
    <property type="entry name" value="Porphobilin_deaminase_cofac_BS"/>
</dbReference>
<dbReference type="InterPro" id="IPR022417">
    <property type="entry name" value="Porphobilin_deaminase_N"/>
</dbReference>
<dbReference type="InterPro" id="IPR022418">
    <property type="entry name" value="Porphobilinogen_deaminase_C"/>
</dbReference>
<dbReference type="InterPro" id="IPR036803">
    <property type="entry name" value="Porphobilinogen_deaminase_C_sf"/>
</dbReference>
<dbReference type="NCBIfam" id="TIGR00212">
    <property type="entry name" value="hemC"/>
    <property type="match status" value="1"/>
</dbReference>
<dbReference type="PANTHER" id="PTHR11557">
    <property type="entry name" value="PORPHOBILINOGEN DEAMINASE"/>
    <property type="match status" value="1"/>
</dbReference>
<dbReference type="PANTHER" id="PTHR11557:SF0">
    <property type="entry name" value="PORPHOBILINOGEN DEAMINASE"/>
    <property type="match status" value="1"/>
</dbReference>
<dbReference type="Pfam" id="PF01379">
    <property type="entry name" value="Porphobil_deam"/>
    <property type="match status" value="1"/>
</dbReference>
<dbReference type="Pfam" id="PF03900">
    <property type="entry name" value="Porphobil_deamC"/>
    <property type="match status" value="1"/>
</dbReference>
<dbReference type="PIRSF" id="PIRSF001438">
    <property type="entry name" value="4pyrrol_synth_OHMeBilane_synth"/>
    <property type="match status" value="1"/>
</dbReference>
<dbReference type="PRINTS" id="PR00151">
    <property type="entry name" value="PORPHBDMNASE"/>
</dbReference>
<dbReference type="SUPFAM" id="SSF53850">
    <property type="entry name" value="Periplasmic binding protein-like II"/>
    <property type="match status" value="1"/>
</dbReference>
<dbReference type="SUPFAM" id="SSF54782">
    <property type="entry name" value="Porphobilinogen deaminase (hydroxymethylbilane synthase), C-terminal domain"/>
    <property type="match status" value="1"/>
</dbReference>
<dbReference type="PROSITE" id="PS00533">
    <property type="entry name" value="PORPHOBILINOGEN_DEAM"/>
    <property type="match status" value="1"/>
</dbReference>
<sequence length="309" mass="33726">MRKIIVGSRKSKLALTQTNWFIDQLKALGLPYEFEVKEIVTKGDVILDVTLSKVGGKGLFVKEIEHALLTKEIDMAVHSMKDMPAVLPDGLTIGCTPKRVDPRDAFISKNGESFKDLAEGAILGTSSLRRSAQLLAARPDLQVKWIRGNIDTRLRKLKDEDYDAIILATAGLQRMGWDGEVITEHLDETLCVPAVGQGALAIECREDDTDLLQLLAHINDAVTERTVAAERVFLHKLEGGCQVPIAGYATLKENDAIELTALVGSMDGSVLLKEIVVGIDPKQVGLEAADRLIKQGAKELILAANKEQQ</sequence>
<accession>A9VIT8</accession>